<dbReference type="EMBL" id="CP001089">
    <property type="protein sequence ID" value="ACD95842.1"/>
    <property type="molecule type" value="Genomic_DNA"/>
</dbReference>
<dbReference type="RefSeq" id="WP_012470181.1">
    <property type="nucleotide sequence ID" value="NC_010814.1"/>
</dbReference>
<dbReference type="SMR" id="B3E421"/>
<dbReference type="STRING" id="398767.Glov_2126"/>
<dbReference type="KEGG" id="glo:Glov_2126"/>
<dbReference type="eggNOG" id="COG1160">
    <property type="taxonomic scope" value="Bacteria"/>
</dbReference>
<dbReference type="HOGENOM" id="CLU_016077_6_2_7"/>
<dbReference type="OrthoDB" id="9805918at2"/>
<dbReference type="Proteomes" id="UP000002420">
    <property type="component" value="Chromosome"/>
</dbReference>
<dbReference type="GO" id="GO:0005525">
    <property type="term" value="F:GTP binding"/>
    <property type="evidence" value="ECO:0007669"/>
    <property type="project" value="UniProtKB-UniRule"/>
</dbReference>
<dbReference type="GO" id="GO:0043022">
    <property type="term" value="F:ribosome binding"/>
    <property type="evidence" value="ECO:0007669"/>
    <property type="project" value="TreeGrafter"/>
</dbReference>
<dbReference type="GO" id="GO:0042254">
    <property type="term" value="P:ribosome biogenesis"/>
    <property type="evidence" value="ECO:0007669"/>
    <property type="project" value="UniProtKB-KW"/>
</dbReference>
<dbReference type="CDD" id="cd01894">
    <property type="entry name" value="EngA1"/>
    <property type="match status" value="1"/>
</dbReference>
<dbReference type="CDD" id="cd01895">
    <property type="entry name" value="EngA2"/>
    <property type="match status" value="1"/>
</dbReference>
<dbReference type="FunFam" id="3.30.300.20:FF:000004">
    <property type="entry name" value="GTPase Der"/>
    <property type="match status" value="1"/>
</dbReference>
<dbReference type="FunFam" id="3.40.50.300:FF:000040">
    <property type="entry name" value="GTPase Der"/>
    <property type="match status" value="1"/>
</dbReference>
<dbReference type="FunFam" id="3.40.50.300:FF:000057">
    <property type="entry name" value="GTPase Der"/>
    <property type="match status" value="1"/>
</dbReference>
<dbReference type="Gene3D" id="3.30.300.20">
    <property type="match status" value="1"/>
</dbReference>
<dbReference type="Gene3D" id="3.40.50.300">
    <property type="entry name" value="P-loop containing nucleotide triphosphate hydrolases"/>
    <property type="match status" value="2"/>
</dbReference>
<dbReference type="HAMAP" id="MF_00195">
    <property type="entry name" value="GTPase_Der"/>
    <property type="match status" value="1"/>
</dbReference>
<dbReference type="InterPro" id="IPR031166">
    <property type="entry name" value="G_ENGA"/>
</dbReference>
<dbReference type="InterPro" id="IPR006073">
    <property type="entry name" value="GTP-bd"/>
</dbReference>
<dbReference type="InterPro" id="IPR016484">
    <property type="entry name" value="GTPase_Der"/>
</dbReference>
<dbReference type="InterPro" id="IPR032859">
    <property type="entry name" value="KH_dom-like"/>
</dbReference>
<dbReference type="InterPro" id="IPR015946">
    <property type="entry name" value="KH_dom-like_a/b"/>
</dbReference>
<dbReference type="InterPro" id="IPR027417">
    <property type="entry name" value="P-loop_NTPase"/>
</dbReference>
<dbReference type="InterPro" id="IPR005225">
    <property type="entry name" value="Small_GTP-bd"/>
</dbReference>
<dbReference type="NCBIfam" id="TIGR03594">
    <property type="entry name" value="GTPase_EngA"/>
    <property type="match status" value="1"/>
</dbReference>
<dbReference type="NCBIfam" id="TIGR00231">
    <property type="entry name" value="small_GTP"/>
    <property type="match status" value="2"/>
</dbReference>
<dbReference type="PANTHER" id="PTHR43834">
    <property type="entry name" value="GTPASE DER"/>
    <property type="match status" value="1"/>
</dbReference>
<dbReference type="PANTHER" id="PTHR43834:SF6">
    <property type="entry name" value="GTPASE DER"/>
    <property type="match status" value="1"/>
</dbReference>
<dbReference type="Pfam" id="PF14714">
    <property type="entry name" value="KH_dom-like"/>
    <property type="match status" value="1"/>
</dbReference>
<dbReference type="Pfam" id="PF01926">
    <property type="entry name" value="MMR_HSR1"/>
    <property type="match status" value="2"/>
</dbReference>
<dbReference type="PIRSF" id="PIRSF006485">
    <property type="entry name" value="GTP-binding_EngA"/>
    <property type="match status" value="1"/>
</dbReference>
<dbReference type="PRINTS" id="PR00326">
    <property type="entry name" value="GTP1OBG"/>
</dbReference>
<dbReference type="SUPFAM" id="SSF52540">
    <property type="entry name" value="P-loop containing nucleoside triphosphate hydrolases"/>
    <property type="match status" value="2"/>
</dbReference>
<dbReference type="PROSITE" id="PS51712">
    <property type="entry name" value="G_ENGA"/>
    <property type="match status" value="2"/>
</dbReference>
<proteinExistence type="inferred from homology"/>
<evidence type="ECO:0000255" key="1">
    <source>
        <dbReference type="HAMAP-Rule" id="MF_00195"/>
    </source>
</evidence>
<keyword id="KW-0342">GTP-binding</keyword>
<keyword id="KW-0547">Nucleotide-binding</keyword>
<keyword id="KW-1185">Reference proteome</keyword>
<keyword id="KW-0677">Repeat</keyword>
<keyword id="KW-0690">Ribosome biogenesis</keyword>
<organism>
    <name type="scientific">Trichlorobacter lovleyi (strain ATCC BAA-1151 / DSM 17278 / SZ)</name>
    <name type="common">Geobacter lovleyi</name>
    <dbReference type="NCBI Taxonomy" id="398767"/>
    <lineage>
        <taxon>Bacteria</taxon>
        <taxon>Pseudomonadati</taxon>
        <taxon>Thermodesulfobacteriota</taxon>
        <taxon>Desulfuromonadia</taxon>
        <taxon>Geobacterales</taxon>
        <taxon>Geobacteraceae</taxon>
        <taxon>Trichlorobacter</taxon>
    </lineage>
</organism>
<protein>
    <recommendedName>
        <fullName evidence="1">GTPase Der</fullName>
    </recommendedName>
    <alternativeName>
        <fullName evidence="1">GTP-binding protein EngA</fullName>
    </alternativeName>
</protein>
<sequence>MKSIVAIVGRPNVGKSTLFNRIVGERRAIVDDMPGVTRDRNYAVVERYDKPFILVDTGGFEPVTEDRMLQQMREQSLLAMEEADVILFLMDAKQGLTPADNEVASMLRRVDKPVFYVVNKVDGEKVENEAAEFYALGIDNMHTISAAHNRGIRDLLDEIMALLPDEPLPGEDEVTNIAVVGRPNVGKSSLVNRLLGFERVVANPVAGTTRDSVDTFFTCNKKRYCLIDTAGIRRKGKTSQKLEKYSVVDALKSIERADVALIVLNAEDGITEQDKHIAGYVYEAGRACVFVVNKWDTLEKDNKTIGKFVEQIQYEFKFLAFAPIVFVSARTGQRIHKVMEEAAEVAEQYSRRVTTSELNRVFKEAVEAHHAPLHHARRVKFYFATQVGVKPPTFAIFTNQPDGVLTPYQRYLGNRFRDAFGFKGTPFRLLFRGRERKTADGRERKLSKQ</sequence>
<gene>
    <name evidence="1" type="primary">der</name>
    <name type="synonym">engA</name>
    <name type="ordered locus">Glov_2126</name>
</gene>
<name>DER_TRIL1</name>
<accession>B3E421</accession>
<reference key="1">
    <citation type="submission" date="2008-05" db="EMBL/GenBank/DDBJ databases">
        <title>Complete sequence of chromosome of Geobacter lovleyi SZ.</title>
        <authorList>
            <consortium name="US DOE Joint Genome Institute"/>
            <person name="Lucas S."/>
            <person name="Copeland A."/>
            <person name="Lapidus A."/>
            <person name="Glavina del Rio T."/>
            <person name="Dalin E."/>
            <person name="Tice H."/>
            <person name="Bruce D."/>
            <person name="Goodwin L."/>
            <person name="Pitluck S."/>
            <person name="Chertkov O."/>
            <person name="Meincke L."/>
            <person name="Brettin T."/>
            <person name="Detter J.C."/>
            <person name="Han C."/>
            <person name="Tapia R."/>
            <person name="Kuske C.R."/>
            <person name="Schmutz J."/>
            <person name="Larimer F."/>
            <person name="Land M."/>
            <person name="Hauser L."/>
            <person name="Kyrpides N."/>
            <person name="Mikhailova N."/>
            <person name="Sung Y."/>
            <person name="Fletcher K.E."/>
            <person name="Ritalahti K.M."/>
            <person name="Loeffler F.E."/>
            <person name="Richardson P."/>
        </authorList>
    </citation>
    <scope>NUCLEOTIDE SEQUENCE [LARGE SCALE GENOMIC DNA]</scope>
    <source>
        <strain>ATCC BAA-1151 / DSM 17278 / SZ</strain>
    </source>
</reference>
<feature type="chain" id="PRO_1000099125" description="GTPase Der">
    <location>
        <begin position="1"/>
        <end position="449"/>
    </location>
</feature>
<feature type="domain" description="EngA-type G 1">
    <location>
        <begin position="3"/>
        <end position="167"/>
    </location>
</feature>
<feature type="domain" description="EngA-type G 2">
    <location>
        <begin position="175"/>
        <end position="350"/>
    </location>
</feature>
<feature type="domain" description="KH-like" evidence="1">
    <location>
        <begin position="351"/>
        <end position="435"/>
    </location>
</feature>
<feature type="binding site" evidence="1">
    <location>
        <begin position="9"/>
        <end position="16"/>
    </location>
    <ligand>
        <name>GTP</name>
        <dbReference type="ChEBI" id="CHEBI:37565"/>
        <label>1</label>
    </ligand>
</feature>
<feature type="binding site" evidence="1">
    <location>
        <begin position="56"/>
        <end position="60"/>
    </location>
    <ligand>
        <name>GTP</name>
        <dbReference type="ChEBI" id="CHEBI:37565"/>
        <label>1</label>
    </ligand>
</feature>
<feature type="binding site" evidence="1">
    <location>
        <begin position="119"/>
        <end position="122"/>
    </location>
    <ligand>
        <name>GTP</name>
        <dbReference type="ChEBI" id="CHEBI:37565"/>
        <label>1</label>
    </ligand>
</feature>
<feature type="binding site" evidence="1">
    <location>
        <begin position="181"/>
        <end position="188"/>
    </location>
    <ligand>
        <name>GTP</name>
        <dbReference type="ChEBI" id="CHEBI:37565"/>
        <label>2</label>
    </ligand>
</feature>
<feature type="binding site" evidence="1">
    <location>
        <begin position="228"/>
        <end position="232"/>
    </location>
    <ligand>
        <name>GTP</name>
        <dbReference type="ChEBI" id="CHEBI:37565"/>
        <label>2</label>
    </ligand>
</feature>
<feature type="binding site" evidence="1">
    <location>
        <begin position="293"/>
        <end position="296"/>
    </location>
    <ligand>
        <name>GTP</name>
        <dbReference type="ChEBI" id="CHEBI:37565"/>
        <label>2</label>
    </ligand>
</feature>
<comment type="function">
    <text evidence="1">GTPase that plays an essential role in the late steps of ribosome biogenesis.</text>
</comment>
<comment type="subunit">
    <text evidence="1">Associates with the 50S ribosomal subunit.</text>
</comment>
<comment type="similarity">
    <text evidence="1">Belongs to the TRAFAC class TrmE-Era-EngA-EngB-Septin-like GTPase superfamily. EngA (Der) GTPase family.</text>
</comment>